<keyword id="KW-0227">DNA damage</keyword>
<keyword id="KW-0233">DNA recombination</keyword>
<keyword id="KW-0234">DNA repair</keyword>
<keyword id="KW-0235">DNA replication</keyword>
<keyword id="KW-0238">DNA-binding</keyword>
<keyword id="KW-0479">Metal-binding</keyword>
<keyword id="KW-0539">Nucleus</keyword>
<keyword id="KW-1185">Reference proteome</keyword>
<keyword id="KW-0862">Zinc</keyword>
<keyword id="KW-0863">Zinc-finger</keyword>
<proteinExistence type="inferred from homology"/>
<sequence length="604" mass="67289">MENSVTQDGIATVLANQSLDSSSVRPEIVVQVVDLKPAGNRYTFSANDGKMKIKAMLPATLTSDIISGKIQNLGLIRLLEYTVNDIPGKSEEKYMLITKCEAVASALDSEIKAEIKASTGIMLKPKHEFVAKSASQIINEQRGNAAPAARMAMTRRVHPLVSLNPYQGSWTIKVRVTNKGVMRTYKNARGEGCVFNVELTDEEGTQIQATMFNAAARKFYDRFEMGKVYYISRGSLKLANKQFKTVQNDYEMTLNENSEVEEASNEEMFTPETKFNFVPIDELGTYVNQKDLIDVIGVVQSVSPTMSIRRKNDNEMIPKRDITLADETKKTVVVSLWNDLATGIGQELLDMADNHPVIAIKSLKVGAFQGVSLSTISRSNVVINPNSPEATKLKSWYDAEGKETSMSAIGSGMSSSANNGSRSMYSDRVFLSHITSNPSLGEEKPVFFSTRAYISFIKPDQTMWYRACKTCNKKVTEAMDSGYWCESCQKKDQECSLRYIMAVKVSDSTGETWLSAFNDEAEKIIGCTADDLNDLKSEEGEVNEFQTKLKEATWSSHLFRISVSQQEYNSEKRQRITVRGVSPIDFAAETRLLLQDISKNKTSQ</sequence>
<reference key="1">
    <citation type="journal article" date="2000" name="Nature">
        <title>Sequence and analysis of chromosome 5 of the plant Arabidopsis thaliana.</title>
        <authorList>
            <person name="Tabata S."/>
            <person name="Kaneko T."/>
            <person name="Nakamura Y."/>
            <person name="Kotani H."/>
            <person name="Kato T."/>
            <person name="Asamizu E."/>
            <person name="Miyajima N."/>
            <person name="Sasamoto S."/>
            <person name="Kimura T."/>
            <person name="Hosouchi T."/>
            <person name="Kawashima K."/>
            <person name="Kohara M."/>
            <person name="Matsumoto M."/>
            <person name="Matsuno A."/>
            <person name="Muraki A."/>
            <person name="Nakayama S."/>
            <person name="Nakazaki N."/>
            <person name="Naruo K."/>
            <person name="Okumura S."/>
            <person name="Shinpo S."/>
            <person name="Takeuchi C."/>
            <person name="Wada T."/>
            <person name="Watanabe A."/>
            <person name="Yamada M."/>
            <person name="Yasuda M."/>
            <person name="Sato S."/>
            <person name="de la Bastide M."/>
            <person name="Huang E."/>
            <person name="Spiegel L."/>
            <person name="Gnoj L."/>
            <person name="O'Shaughnessy A."/>
            <person name="Preston R."/>
            <person name="Habermann K."/>
            <person name="Murray J."/>
            <person name="Johnson D."/>
            <person name="Rohlfing T."/>
            <person name="Nelson J."/>
            <person name="Stoneking T."/>
            <person name="Pepin K."/>
            <person name="Spieth J."/>
            <person name="Sekhon M."/>
            <person name="Armstrong J."/>
            <person name="Becker M."/>
            <person name="Belter E."/>
            <person name="Cordum H."/>
            <person name="Cordes M."/>
            <person name="Courtney L."/>
            <person name="Courtney W."/>
            <person name="Dante M."/>
            <person name="Du H."/>
            <person name="Edwards J."/>
            <person name="Fryman J."/>
            <person name="Haakensen B."/>
            <person name="Lamar E."/>
            <person name="Latreille P."/>
            <person name="Leonard S."/>
            <person name="Meyer R."/>
            <person name="Mulvaney E."/>
            <person name="Ozersky P."/>
            <person name="Riley A."/>
            <person name="Strowmatt C."/>
            <person name="Wagner-McPherson C."/>
            <person name="Wollam A."/>
            <person name="Yoakum M."/>
            <person name="Bell M."/>
            <person name="Dedhia N."/>
            <person name="Parnell L."/>
            <person name="Shah R."/>
            <person name="Rodriguez M."/>
            <person name="Hoon See L."/>
            <person name="Vil D."/>
            <person name="Baker J."/>
            <person name="Kirchoff K."/>
            <person name="Toth K."/>
            <person name="King L."/>
            <person name="Bahret A."/>
            <person name="Miller B."/>
            <person name="Marra M.A."/>
            <person name="Martienssen R."/>
            <person name="McCombie W.R."/>
            <person name="Wilson R.K."/>
            <person name="Murphy G."/>
            <person name="Bancroft I."/>
            <person name="Volckaert G."/>
            <person name="Wambutt R."/>
            <person name="Duesterhoeft A."/>
            <person name="Stiekema W."/>
            <person name="Pohl T."/>
            <person name="Entian K.-D."/>
            <person name="Terryn N."/>
            <person name="Hartley N."/>
            <person name="Bent E."/>
            <person name="Johnson S."/>
            <person name="Langham S.-A."/>
            <person name="McCullagh B."/>
            <person name="Robben J."/>
            <person name="Grymonprez B."/>
            <person name="Zimmermann W."/>
            <person name="Ramsperger U."/>
            <person name="Wedler H."/>
            <person name="Balke K."/>
            <person name="Wedler E."/>
            <person name="Peters S."/>
            <person name="van Staveren M."/>
            <person name="Dirkse W."/>
            <person name="Mooijman P."/>
            <person name="Klein Lankhorst R."/>
            <person name="Weitzenegger T."/>
            <person name="Bothe G."/>
            <person name="Rose M."/>
            <person name="Hauf J."/>
            <person name="Berneiser S."/>
            <person name="Hempel S."/>
            <person name="Feldpausch M."/>
            <person name="Lamberth S."/>
            <person name="Villarroel R."/>
            <person name="Gielen J."/>
            <person name="Ardiles W."/>
            <person name="Bents O."/>
            <person name="Lemcke K."/>
            <person name="Kolesov G."/>
            <person name="Mayer K.F.X."/>
            <person name="Rudd S."/>
            <person name="Schoof H."/>
            <person name="Schueller C."/>
            <person name="Zaccaria P."/>
            <person name="Mewes H.-W."/>
            <person name="Bevan M."/>
            <person name="Fransz P.F."/>
        </authorList>
    </citation>
    <scope>NUCLEOTIDE SEQUENCE [LARGE SCALE GENOMIC DNA]</scope>
    <source>
        <strain>cv. Columbia</strain>
    </source>
</reference>
<reference key="2">
    <citation type="journal article" date="2017" name="Plant J.">
        <title>Araport11: a complete reannotation of the Arabidopsis thaliana reference genome.</title>
        <authorList>
            <person name="Cheng C.Y."/>
            <person name="Krishnakumar V."/>
            <person name="Chan A.P."/>
            <person name="Thibaud-Nissen F."/>
            <person name="Schobel S."/>
            <person name="Town C.D."/>
        </authorList>
    </citation>
    <scope>GENOME REANNOTATION</scope>
    <source>
        <strain>cv. Columbia</strain>
    </source>
</reference>
<reference key="3">
    <citation type="journal article" date="2005" name="FEBS J.">
        <title>Two types of replication protein A in seed plants.</title>
        <authorList>
            <person name="Ishibashi T."/>
            <person name="Koga A."/>
            <person name="Yamamoto T."/>
            <person name="Uchiyama Y."/>
            <person name="Mori Y."/>
            <person name="Hashimoto J."/>
            <person name="Kimura S."/>
            <person name="Sakaguchi K."/>
        </authorList>
    </citation>
    <scope>DISRUPTION PHENOTYPE</scope>
</reference>
<evidence type="ECO:0000250" key="1"/>
<evidence type="ECO:0000255" key="2"/>
<evidence type="ECO:0000269" key="3">
    <source>
    </source>
</evidence>
<evidence type="ECO:0000305" key="4"/>
<feature type="chain" id="PRO_0000422616" description="Replication protein A 70 kDa DNA-binding subunit B">
    <location>
        <begin position="1"/>
        <end position="604"/>
    </location>
</feature>
<feature type="DNA-binding region" description="OB">
    <location>
        <begin position="170"/>
        <end position="256"/>
    </location>
</feature>
<feature type="zinc finger region" description="C4-type" evidence="2">
    <location>
        <begin position="468"/>
        <end position="488"/>
    </location>
</feature>
<comment type="function">
    <text evidence="1">Component of the replication protein A complex (RPA) required for DNA recombination, repair and replication. The activity of RPA is mediated by single-stranded DNA binding and protein interactions (By similarity). Probably involved in repair of double-strand DNA breaks (DSBs) induced by genotoxic stresses (By similarity).</text>
</comment>
<comment type="subunit">
    <text evidence="1">Heterotrimer of RPA1, RPA2 and RPA3 (canonical replication protein A complex).</text>
</comment>
<comment type="subcellular location">
    <subcellularLocation>
        <location evidence="1">Nucleus</location>
    </subcellularLocation>
</comment>
<comment type="disruption phenotype">
    <text evidence="3">No visible phenotype under normal growth conditions, but mutant plants have increased sensitivity to genotoxic stresses and agents that damage DNA bases (UV and methyl methanesulfonate, MMS).</text>
</comment>
<comment type="similarity">
    <text evidence="4">Belongs to the replication factor A protein 1 family.</text>
</comment>
<protein>
    <recommendedName>
        <fullName>Replication protein A 70 kDa DNA-binding subunit B</fullName>
        <shortName>AtRPA70B</shortName>
    </recommendedName>
    <alternativeName>
        <fullName>AtRPA1-5</fullName>
    </alternativeName>
    <alternativeName>
        <fullName>Replication factor A protein 1B</fullName>
    </alternativeName>
    <alternativeName>
        <fullName>Replication protein A 1B</fullName>
        <shortName>AtRPA1B</shortName>
    </alternativeName>
</protein>
<accession>Q9SD82</accession>
<organism>
    <name type="scientific">Arabidopsis thaliana</name>
    <name type="common">Mouse-ear cress</name>
    <dbReference type="NCBI Taxonomy" id="3702"/>
    <lineage>
        <taxon>Eukaryota</taxon>
        <taxon>Viridiplantae</taxon>
        <taxon>Streptophyta</taxon>
        <taxon>Embryophyta</taxon>
        <taxon>Tracheophyta</taxon>
        <taxon>Spermatophyta</taxon>
        <taxon>Magnoliopsida</taxon>
        <taxon>eudicotyledons</taxon>
        <taxon>Gunneridae</taxon>
        <taxon>Pentapetalae</taxon>
        <taxon>rosids</taxon>
        <taxon>malvids</taxon>
        <taxon>Brassicales</taxon>
        <taxon>Brassicaceae</taxon>
        <taxon>Camelineae</taxon>
        <taxon>Arabidopsis</taxon>
    </lineage>
</organism>
<name>RFA1B_ARATH</name>
<dbReference type="EMBL" id="AL133421">
    <property type="protein sequence ID" value="CAB62614.1"/>
    <property type="molecule type" value="Genomic_DNA"/>
</dbReference>
<dbReference type="EMBL" id="CP002688">
    <property type="protein sequence ID" value="AED91235.1"/>
    <property type="molecule type" value="Genomic_DNA"/>
</dbReference>
<dbReference type="PIR" id="T45627">
    <property type="entry name" value="T45627"/>
</dbReference>
<dbReference type="RefSeq" id="NP_196419.1">
    <property type="nucleotide sequence ID" value="NM_120884.2"/>
</dbReference>
<dbReference type="SMR" id="Q9SD82"/>
<dbReference type="BioGRID" id="15974">
    <property type="interactions" value="1"/>
</dbReference>
<dbReference type="FunCoup" id="Q9SD82">
    <property type="interactions" value="606"/>
</dbReference>
<dbReference type="STRING" id="3702.Q9SD82"/>
<dbReference type="PaxDb" id="3702-AT5G08020.1"/>
<dbReference type="ProteomicsDB" id="236231"/>
<dbReference type="EnsemblPlants" id="AT5G08020.1">
    <property type="protein sequence ID" value="AT5G08020.1"/>
    <property type="gene ID" value="AT5G08020"/>
</dbReference>
<dbReference type="GeneID" id="830696"/>
<dbReference type="Gramene" id="AT5G08020.1">
    <property type="protein sequence ID" value="AT5G08020.1"/>
    <property type="gene ID" value="AT5G08020"/>
</dbReference>
<dbReference type="KEGG" id="ath:AT5G08020"/>
<dbReference type="Araport" id="AT5G08020"/>
<dbReference type="TAIR" id="AT5G08020">
    <property type="gene designation" value="RPA70B"/>
</dbReference>
<dbReference type="eggNOG" id="KOG0851">
    <property type="taxonomic scope" value="Eukaryota"/>
</dbReference>
<dbReference type="HOGENOM" id="CLU_012393_3_1_1"/>
<dbReference type="InParanoid" id="Q9SD82"/>
<dbReference type="OMA" id="FNSYAML"/>
<dbReference type="OrthoDB" id="1751331at2759"/>
<dbReference type="PhylomeDB" id="Q9SD82"/>
<dbReference type="PRO" id="PR:Q9SD82"/>
<dbReference type="Proteomes" id="UP000006548">
    <property type="component" value="Chromosome 5"/>
</dbReference>
<dbReference type="ExpressionAtlas" id="Q9SD82">
    <property type="expression patterns" value="baseline and differential"/>
</dbReference>
<dbReference type="GO" id="GO:0005634">
    <property type="term" value="C:nucleus"/>
    <property type="evidence" value="ECO:0007669"/>
    <property type="project" value="UniProtKB-SubCell"/>
</dbReference>
<dbReference type="GO" id="GO:0003677">
    <property type="term" value="F:DNA binding"/>
    <property type="evidence" value="ECO:0007669"/>
    <property type="project" value="UniProtKB-KW"/>
</dbReference>
<dbReference type="GO" id="GO:0008270">
    <property type="term" value="F:zinc ion binding"/>
    <property type="evidence" value="ECO:0007669"/>
    <property type="project" value="UniProtKB-KW"/>
</dbReference>
<dbReference type="GO" id="GO:0006310">
    <property type="term" value="P:DNA recombination"/>
    <property type="evidence" value="ECO:0007669"/>
    <property type="project" value="UniProtKB-KW"/>
</dbReference>
<dbReference type="GO" id="GO:0006281">
    <property type="term" value="P:DNA repair"/>
    <property type="evidence" value="ECO:0000304"/>
    <property type="project" value="TAIR"/>
</dbReference>
<dbReference type="GO" id="GO:0006260">
    <property type="term" value="P:DNA replication"/>
    <property type="evidence" value="ECO:0007669"/>
    <property type="project" value="UniProtKB-KW"/>
</dbReference>
<dbReference type="GO" id="GO:0010224">
    <property type="term" value="P:response to UV-B"/>
    <property type="evidence" value="ECO:0000315"/>
    <property type="project" value="TAIR"/>
</dbReference>
<dbReference type="CDD" id="cd04474">
    <property type="entry name" value="RPA1_DBD_A"/>
    <property type="match status" value="1"/>
</dbReference>
<dbReference type="CDD" id="cd04475">
    <property type="entry name" value="RPA1_DBD_B"/>
    <property type="match status" value="1"/>
</dbReference>
<dbReference type="CDD" id="cd04476">
    <property type="entry name" value="RPA1_DBD_C"/>
    <property type="match status" value="1"/>
</dbReference>
<dbReference type="FunFam" id="2.40.50.140:FF:000041">
    <property type="entry name" value="Replication protein A subunit"/>
    <property type="match status" value="1"/>
</dbReference>
<dbReference type="FunFam" id="2.40.50.140:FF:000064">
    <property type="entry name" value="Replication protein A subunit"/>
    <property type="match status" value="1"/>
</dbReference>
<dbReference type="FunFam" id="2.40.50.140:FF:000090">
    <property type="entry name" value="Replication protein A subunit"/>
    <property type="match status" value="1"/>
</dbReference>
<dbReference type="FunFam" id="2.40.50.140:FF:000257">
    <property type="entry name" value="Replication protein A subunit"/>
    <property type="match status" value="1"/>
</dbReference>
<dbReference type="Gene3D" id="2.40.50.140">
    <property type="entry name" value="Nucleic acid-binding proteins"/>
    <property type="match status" value="4"/>
</dbReference>
<dbReference type="InterPro" id="IPR047192">
    <property type="entry name" value="Euk_RPA1_DBD_C"/>
</dbReference>
<dbReference type="InterPro" id="IPR012340">
    <property type="entry name" value="NA-bd_OB-fold"/>
</dbReference>
<dbReference type="InterPro" id="IPR013955">
    <property type="entry name" value="Rep_factor-A_C"/>
</dbReference>
<dbReference type="InterPro" id="IPR007199">
    <property type="entry name" value="Rep_factor-A_N"/>
</dbReference>
<dbReference type="InterPro" id="IPR031657">
    <property type="entry name" value="REPA_OB_2"/>
</dbReference>
<dbReference type="InterPro" id="IPR004591">
    <property type="entry name" value="Rfa1"/>
</dbReference>
<dbReference type="InterPro" id="IPR003871">
    <property type="entry name" value="RFA1B/D_OB_1st"/>
</dbReference>
<dbReference type="NCBIfam" id="TIGR00617">
    <property type="entry name" value="rpa1"/>
    <property type="match status" value="1"/>
</dbReference>
<dbReference type="PANTHER" id="PTHR47165">
    <property type="entry name" value="OS03G0429900 PROTEIN"/>
    <property type="match status" value="1"/>
</dbReference>
<dbReference type="PANTHER" id="PTHR47165:SF4">
    <property type="entry name" value="OS03G0429900 PROTEIN"/>
    <property type="match status" value="1"/>
</dbReference>
<dbReference type="Pfam" id="PF02721">
    <property type="entry name" value="DUF223"/>
    <property type="match status" value="1"/>
</dbReference>
<dbReference type="Pfam" id="PF04057">
    <property type="entry name" value="Rep-A_N"/>
    <property type="match status" value="1"/>
</dbReference>
<dbReference type="Pfam" id="PF08646">
    <property type="entry name" value="Rep_fac-A_C"/>
    <property type="match status" value="1"/>
</dbReference>
<dbReference type="Pfam" id="PF16900">
    <property type="entry name" value="REPA_OB_2"/>
    <property type="match status" value="1"/>
</dbReference>
<dbReference type="SUPFAM" id="SSF50249">
    <property type="entry name" value="Nucleic acid-binding proteins"/>
    <property type="match status" value="4"/>
</dbReference>
<gene>
    <name type="primary">RPA1B</name>
    <name type="synonym">RPA70B</name>
    <name type="ordered locus">At5g08020</name>
    <name type="ORF">F13G24.220</name>
</gene>